<comment type="function">
    <text evidence="1">Catalyzes the ATP-dependent phosphorylation of L-homoserine to L-homoserine phosphate.</text>
</comment>
<comment type="catalytic activity">
    <reaction evidence="1">
        <text>L-homoserine + ATP = O-phospho-L-homoserine + ADP + H(+)</text>
        <dbReference type="Rhea" id="RHEA:13985"/>
        <dbReference type="ChEBI" id="CHEBI:15378"/>
        <dbReference type="ChEBI" id="CHEBI:30616"/>
        <dbReference type="ChEBI" id="CHEBI:57476"/>
        <dbReference type="ChEBI" id="CHEBI:57590"/>
        <dbReference type="ChEBI" id="CHEBI:456216"/>
        <dbReference type="EC" id="2.7.1.39"/>
    </reaction>
</comment>
<comment type="pathway">
    <text evidence="1">Amino-acid biosynthesis; L-threonine biosynthesis; L-threonine from L-aspartate: step 4/5.</text>
</comment>
<comment type="subcellular location">
    <subcellularLocation>
        <location evidence="1">Cytoplasm</location>
    </subcellularLocation>
</comment>
<comment type="similarity">
    <text evidence="1">Belongs to the GHMP kinase family. Homoserine kinase subfamily.</text>
</comment>
<evidence type="ECO:0000255" key="1">
    <source>
        <dbReference type="HAMAP-Rule" id="MF_00384"/>
    </source>
</evidence>
<sequence length="286" mass="30219">MKITVPATSANIGPGFDSVGVAVSKYLTIEVLEPADVWFIEHDLGDIPSDENNLLISTALQVKSDLQPHKLVMASDIPLARGLGSSSSVIVAGIELANQLADLKLSDDDKLDIATKIEGHPDNVAPAIFGNLVVASYVDEHVNSIVTEFPECAFVAFIPSYELKTSESRGVLPSDLSYKDAVAASSIANVAIAALFAGDLVKAGRAIQGDMFHERYRQKLVKEFVTIKELSGQYGAYATYLSGAGPTVMTLTPNDQAEALKTAIDGIGLDGETLILSVDKGGVVVD</sequence>
<reference key="1">
    <citation type="journal article" date="2004" name="Nat. Biotechnol.">
        <title>Complete sequence and comparative genome analysis of the dairy bacterium Streptococcus thermophilus.</title>
        <authorList>
            <person name="Bolotin A."/>
            <person name="Quinquis B."/>
            <person name="Renault P."/>
            <person name="Sorokin A."/>
            <person name="Ehrlich S.D."/>
            <person name="Kulakauskas S."/>
            <person name="Lapidus A."/>
            <person name="Goltsman E."/>
            <person name="Mazur M."/>
            <person name="Pusch G.D."/>
            <person name="Fonstein M."/>
            <person name="Overbeek R."/>
            <person name="Kyprides N."/>
            <person name="Purnelle B."/>
            <person name="Prozzi D."/>
            <person name="Ngui K."/>
            <person name="Masuy D."/>
            <person name="Hancy F."/>
            <person name="Burteau S."/>
            <person name="Boutry M."/>
            <person name="Delcour J."/>
            <person name="Goffeau A."/>
            <person name="Hols P."/>
        </authorList>
    </citation>
    <scope>NUCLEOTIDE SEQUENCE [LARGE SCALE GENOMIC DNA]</scope>
    <source>
        <strain>CNRZ 1066</strain>
    </source>
</reference>
<dbReference type="EC" id="2.7.1.39" evidence="1"/>
<dbReference type="EMBL" id="CP000024">
    <property type="protein sequence ID" value="AAV62070.1"/>
    <property type="molecule type" value="Genomic_DNA"/>
</dbReference>
<dbReference type="RefSeq" id="WP_011225586.1">
    <property type="nucleotide sequence ID" value="NC_006449.1"/>
</dbReference>
<dbReference type="SMR" id="Q5M117"/>
<dbReference type="KEGG" id="stc:str0470"/>
<dbReference type="HOGENOM" id="CLU_041243_0_0_9"/>
<dbReference type="UniPathway" id="UPA00050">
    <property type="reaction ID" value="UER00064"/>
</dbReference>
<dbReference type="GO" id="GO:0005737">
    <property type="term" value="C:cytoplasm"/>
    <property type="evidence" value="ECO:0007669"/>
    <property type="project" value="UniProtKB-SubCell"/>
</dbReference>
<dbReference type="GO" id="GO:0005524">
    <property type="term" value="F:ATP binding"/>
    <property type="evidence" value="ECO:0007669"/>
    <property type="project" value="UniProtKB-UniRule"/>
</dbReference>
<dbReference type="GO" id="GO:0004413">
    <property type="term" value="F:homoserine kinase activity"/>
    <property type="evidence" value="ECO:0007669"/>
    <property type="project" value="UniProtKB-UniRule"/>
</dbReference>
<dbReference type="GO" id="GO:0009088">
    <property type="term" value="P:threonine biosynthetic process"/>
    <property type="evidence" value="ECO:0007669"/>
    <property type="project" value="UniProtKB-UniRule"/>
</dbReference>
<dbReference type="Gene3D" id="3.30.230.10">
    <property type="match status" value="1"/>
</dbReference>
<dbReference type="Gene3D" id="3.30.70.890">
    <property type="entry name" value="GHMP kinase, C-terminal domain"/>
    <property type="match status" value="1"/>
</dbReference>
<dbReference type="HAMAP" id="MF_00384">
    <property type="entry name" value="Homoser_kinase"/>
    <property type="match status" value="1"/>
</dbReference>
<dbReference type="InterPro" id="IPR013750">
    <property type="entry name" value="GHMP_kinase_C_dom"/>
</dbReference>
<dbReference type="InterPro" id="IPR036554">
    <property type="entry name" value="GHMP_kinase_C_sf"/>
</dbReference>
<dbReference type="InterPro" id="IPR006204">
    <property type="entry name" value="GHMP_kinase_N_dom"/>
</dbReference>
<dbReference type="InterPro" id="IPR006203">
    <property type="entry name" value="GHMP_knse_ATP-bd_CS"/>
</dbReference>
<dbReference type="InterPro" id="IPR000870">
    <property type="entry name" value="Homoserine_kinase"/>
</dbReference>
<dbReference type="InterPro" id="IPR020568">
    <property type="entry name" value="Ribosomal_Su5_D2-typ_SF"/>
</dbReference>
<dbReference type="InterPro" id="IPR014721">
    <property type="entry name" value="Ribsml_uS5_D2-typ_fold_subgr"/>
</dbReference>
<dbReference type="NCBIfam" id="TIGR00191">
    <property type="entry name" value="thrB"/>
    <property type="match status" value="1"/>
</dbReference>
<dbReference type="PANTHER" id="PTHR20861:SF1">
    <property type="entry name" value="HOMOSERINE KINASE"/>
    <property type="match status" value="1"/>
</dbReference>
<dbReference type="PANTHER" id="PTHR20861">
    <property type="entry name" value="HOMOSERINE/4-DIPHOSPHOCYTIDYL-2-C-METHYL-D-ERYTHRITOL KINASE"/>
    <property type="match status" value="1"/>
</dbReference>
<dbReference type="Pfam" id="PF08544">
    <property type="entry name" value="GHMP_kinases_C"/>
    <property type="match status" value="1"/>
</dbReference>
<dbReference type="Pfam" id="PF00288">
    <property type="entry name" value="GHMP_kinases_N"/>
    <property type="match status" value="1"/>
</dbReference>
<dbReference type="PIRSF" id="PIRSF000676">
    <property type="entry name" value="Homoser_kin"/>
    <property type="match status" value="1"/>
</dbReference>
<dbReference type="PRINTS" id="PR00958">
    <property type="entry name" value="HOMSERKINASE"/>
</dbReference>
<dbReference type="SUPFAM" id="SSF55060">
    <property type="entry name" value="GHMP Kinase, C-terminal domain"/>
    <property type="match status" value="1"/>
</dbReference>
<dbReference type="SUPFAM" id="SSF54211">
    <property type="entry name" value="Ribosomal protein S5 domain 2-like"/>
    <property type="match status" value="1"/>
</dbReference>
<dbReference type="PROSITE" id="PS00627">
    <property type="entry name" value="GHMP_KINASES_ATP"/>
    <property type="match status" value="1"/>
</dbReference>
<protein>
    <recommendedName>
        <fullName evidence="1">Homoserine kinase</fullName>
        <shortName evidence="1">HK</shortName>
        <shortName evidence="1">HSK</shortName>
        <ecNumber evidence="1">2.7.1.39</ecNumber>
    </recommendedName>
</protein>
<feature type="chain" id="PRO_1000049178" description="Homoserine kinase">
    <location>
        <begin position="1"/>
        <end position="286"/>
    </location>
</feature>
<feature type="binding site" evidence="1">
    <location>
        <begin position="78"/>
        <end position="88"/>
    </location>
    <ligand>
        <name>ATP</name>
        <dbReference type="ChEBI" id="CHEBI:30616"/>
    </ligand>
</feature>
<proteinExistence type="inferred from homology"/>
<name>KHSE_STRT1</name>
<keyword id="KW-0028">Amino-acid biosynthesis</keyword>
<keyword id="KW-0067">ATP-binding</keyword>
<keyword id="KW-0963">Cytoplasm</keyword>
<keyword id="KW-0418">Kinase</keyword>
<keyword id="KW-0547">Nucleotide-binding</keyword>
<keyword id="KW-0791">Threonine biosynthesis</keyword>
<keyword id="KW-0808">Transferase</keyword>
<gene>
    <name evidence="1" type="primary">thrB</name>
    <name type="ordered locus">str0470</name>
</gene>
<organism>
    <name type="scientific">Streptococcus thermophilus (strain CNRZ 1066)</name>
    <dbReference type="NCBI Taxonomy" id="299768"/>
    <lineage>
        <taxon>Bacteria</taxon>
        <taxon>Bacillati</taxon>
        <taxon>Bacillota</taxon>
        <taxon>Bacilli</taxon>
        <taxon>Lactobacillales</taxon>
        <taxon>Streptococcaceae</taxon>
        <taxon>Streptococcus</taxon>
    </lineage>
</organism>
<accession>Q5M117</accession>